<protein>
    <recommendedName>
        <fullName evidence="1">S-adenosylmethionine synthase</fullName>
        <shortName evidence="1">AdoMet synthase</shortName>
        <ecNumber evidence="1">2.5.1.6</ecNumber>
    </recommendedName>
    <alternativeName>
        <fullName evidence="1">MAT</fullName>
    </alternativeName>
    <alternativeName>
        <fullName evidence="1">Methionine adenosyltransferase</fullName>
    </alternativeName>
</protein>
<comment type="function">
    <text evidence="1">Catalyzes the formation of S-adenosylmethionine (AdoMet) from methionine and ATP. The overall synthetic reaction is composed of two sequential steps, AdoMet formation and the subsequent tripolyphosphate hydrolysis which occurs prior to release of AdoMet from the enzyme.</text>
</comment>
<comment type="catalytic activity">
    <reaction evidence="1">
        <text>L-methionine + ATP + H2O = S-adenosyl-L-methionine + phosphate + diphosphate</text>
        <dbReference type="Rhea" id="RHEA:21080"/>
        <dbReference type="ChEBI" id="CHEBI:15377"/>
        <dbReference type="ChEBI" id="CHEBI:30616"/>
        <dbReference type="ChEBI" id="CHEBI:33019"/>
        <dbReference type="ChEBI" id="CHEBI:43474"/>
        <dbReference type="ChEBI" id="CHEBI:57844"/>
        <dbReference type="ChEBI" id="CHEBI:59789"/>
        <dbReference type="EC" id="2.5.1.6"/>
    </reaction>
</comment>
<comment type="cofactor">
    <cofactor evidence="1">
        <name>Mg(2+)</name>
        <dbReference type="ChEBI" id="CHEBI:18420"/>
    </cofactor>
    <text evidence="1">Binds 2 divalent ions per subunit.</text>
</comment>
<comment type="cofactor">
    <cofactor evidence="1">
        <name>K(+)</name>
        <dbReference type="ChEBI" id="CHEBI:29103"/>
    </cofactor>
    <text evidence="1">Binds 1 potassium ion per subunit.</text>
</comment>
<comment type="pathway">
    <text evidence="1">Amino-acid biosynthesis; S-adenosyl-L-methionine biosynthesis; S-adenosyl-L-methionine from L-methionine: step 1/1.</text>
</comment>
<comment type="subunit">
    <text evidence="1">Homotetramer; dimer of dimers.</text>
</comment>
<comment type="subcellular location">
    <subcellularLocation>
        <location evidence="1">Cytoplasm</location>
    </subcellularLocation>
</comment>
<comment type="similarity">
    <text evidence="1">Belongs to the AdoMet synthase family.</text>
</comment>
<organism>
    <name type="scientific">Vibrio parahaemolyticus serotype O3:K6 (strain RIMD 2210633)</name>
    <dbReference type="NCBI Taxonomy" id="223926"/>
    <lineage>
        <taxon>Bacteria</taxon>
        <taxon>Pseudomonadati</taxon>
        <taxon>Pseudomonadota</taxon>
        <taxon>Gammaproteobacteria</taxon>
        <taxon>Vibrionales</taxon>
        <taxon>Vibrionaceae</taxon>
        <taxon>Vibrio</taxon>
    </lineage>
</organism>
<evidence type="ECO:0000255" key="1">
    <source>
        <dbReference type="HAMAP-Rule" id="MF_00086"/>
    </source>
</evidence>
<name>METK_VIBPA</name>
<sequence>MAKHLFTSESVSEGHPDKIADQISDAVLDAILEQDPKARVACETYVKTGMVMVGGEITTSAWVDIEELTRETVREIGYVHSDMGFDANSCAVLNTIGKQSPDINQGVDKADPKEQGAGDQGIMFGYACNETEVLMPAPITYSHRLVEKQAEVRKNGTLPWLRPDAKSQVTFQYDQGKIVGIDAVVLSTQHCDSISTPDLREAVMEEIIKPVLPAEWISKDTNFFINPTGRFVIGGPMGDCGLTGRKIIVDTYGGAARHGGGAFSGKDPSKVDRSAAYAARYVAKNIVAAGMADRCEIQLSYAIGVADPTSIMVETFGTEKVSHDIIIEAVRQFFDLRPYGLQEMLNLLQPIYKKTAAYGHFGREEFPWEATDKAELLRDFAGIK</sequence>
<reference key="1">
    <citation type="journal article" date="2003" name="Lancet">
        <title>Genome sequence of Vibrio parahaemolyticus: a pathogenic mechanism distinct from that of V. cholerae.</title>
        <authorList>
            <person name="Makino K."/>
            <person name="Oshima K."/>
            <person name="Kurokawa K."/>
            <person name="Yokoyama K."/>
            <person name="Uda T."/>
            <person name="Tagomori K."/>
            <person name="Iijima Y."/>
            <person name="Najima M."/>
            <person name="Nakano M."/>
            <person name="Yamashita A."/>
            <person name="Kubota Y."/>
            <person name="Kimura S."/>
            <person name="Yasunaga T."/>
            <person name="Honda T."/>
            <person name="Shinagawa H."/>
            <person name="Hattori M."/>
            <person name="Iida T."/>
        </authorList>
    </citation>
    <scope>NUCLEOTIDE SEQUENCE [LARGE SCALE GENOMIC DNA]</scope>
    <source>
        <strain>RIMD 2210633</strain>
    </source>
</reference>
<feature type="chain" id="PRO_0000174621" description="S-adenosylmethionine synthase">
    <location>
        <begin position="1"/>
        <end position="384"/>
    </location>
</feature>
<feature type="region of interest" description="Flexible loop" evidence="1">
    <location>
        <begin position="99"/>
        <end position="109"/>
    </location>
</feature>
<feature type="binding site" description="in other chain" evidence="1">
    <location>
        <position position="15"/>
    </location>
    <ligand>
        <name>ATP</name>
        <dbReference type="ChEBI" id="CHEBI:30616"/>
        <note>ligand shared between two neighboring subunits</note>
    </ligand>
</feature>
<feature type="binding site" evidence="1">
    <location>
        <position position="17"/>
    </location>
    <ligand>
        <name>Mg(2+)</name>
        <dbReference type="ChEBI" id="CHEBI:18420"/>
    </ligand>
</feature>
<feature type="binding site" evidence="1">
    <location>
        <position position="43"/>
    </location>
    <ligand>
        <name>K(+)</name>
        <dbReference type="ChEBI" id="CHEBI:29103"/>
    </ligand>
</feature>
<feature type="binding site" description="in other chain" evidence="1">
    <location>
        <position position="56"/>
    </location>
    <ligand>
        <name>L-methionine</name>
        <dbReference type="ChEBI" id="CHEBI:57844"/>
        <note>ligand shared between two neighboring subunits</note>
    </ligand>
</feature>
<feature type="binding site" description="in other chain" evidence="1">
    <location>
        <position position="99"/>
    </location>
    <ligand>
        <name>L-methionine</name>
        <dbReference type="ChEBI" id="CHEBI:57844"/>
        <note>ligand shared between two neighboring subunits</note>
    </ligand>
</feature>
<feature type="binding site" description="in other chain" evidence="1">
    <location>
        <begin position="164"/>
        <end position="166"/>
    </location>
    <ligand>
        <name>ATP</name>
        <dbReference type="ChEBI" id="CHEBI:30616"/>
        <note>ligand shared between two neighboring subunits</note>
    </ligand>
</feature>
<feature type="binding site" description="in other chain" evidence="1">
    <location>
        <begin position="230"/>
        <end position="231"/>
    </location>
    <ligand>
        <name>ATP</name>
        <dbReference type="ChEBI" id="CHEBI:30616"/>
        <note>ligand shared between two neighboring subunits</note>
    </ligand>
</feature>
<feature type="binding site" evidence="1">
    <location>
        <position position="239"/>
    </location>
    <ligand>
        <name>ATP</name>
        <dbReference type="ChEBI" id="CHEBI:30616"/>
        <note>ligand shared between two neighboring subunits</note>
    </ligand>
</feature>
<feature type="binding site" evidence="1">
    <location>
        <position position="239"/>
    </location>
    <ligand>
        <name>L-methionine</name>
        <dbReference type="ChEBI" id="CHEBI:57844"/>
        <note>ligand shared between two neighboring subunits</note>
    </ligand>
</feature>
<feature type="binding site" description="in other chain" evidence="1">
    <location>
        <begin position="245"/>
        <end position="246"/>
    </location>
    <ligand>
        <name>ATP</name>
        <dbReference type="ChEBI" id="CHEBI:30616"/>
        <note>ligand shared between two neighboring subunits</note>
    </ligand>
</feature>
<feature type="binding site" evidence="1">
    <location>
        <position position="262"/>
    </location>
    <ligand>
        <name>ATP</name>
        <dbReference type="ChEBI" id="CHEBI:30616"/>
        <note>ligand shared between two neighboring subunits</note>
    </ligand>
</feature>
<feature type="binding site" evidence="1">
    <location>
        <position position="266"/>
    </location>
    <ligand>
        <name>ATP</name>
        <dbReference type="ChEBI" id="CHEBI:30616"/>
        <note>ligand shared between two neighboring subunits</note>
    </ligand>
</feature>
<feature type="binding site" description="in other chain" evidence="1">
    <location>
        <position position="270"/>
    </location>
    <ligand>
        <name>L-methionine</name>
        <dbReference type="ChEBI" id="CHEBI:57844"/>
        <note>ligand shared between two neighboring subunits</note>
    </ligand>
</feature>
<gene>
    <name evidence="1" type="primary">metK</name>
    <name type="ordered locus">VP2606</name>
</gene>
<keyword id="KW-0067">ATP-binding</keyword>
<keyword id="KW-0963">Cytoplasm</keyword>
<keyword id="KW-0460">Magnesium</keyword>
<keyword id="KW-0479">Metal-binding</keyword>
<keyword id="KW-0547">Nucleotide-binding</keyword>
<keyword id="KW-0554">One-carbon metabolism</keyword>
<keyword id="KW-0630">Potassium</keyword>
<keyword id="KW-0808">Transferase</keyword>
<dbReference type="EC" id="2.5.1.6" evidence="1"/>
<dbReference type="EMBL" id="BA000031">
    <property type="protein sequence ID" value="BAC60869.1"/>
    <property type="molecule type" value="Genomic_DNA"/>
</dbReference>
<dbReference type="RefSeq" id="NP_798985.1">
    <property type="nucleotide sequence ID" value="NC_004603.1"/>
</dbReference>
<dbReference type="RefSeq" id="WP_005461723.1">
    <property type="nucleotide sequence ID" value="NC_004603.1"/>
</dbReference>
<dbReference type="SMR" id="Q87LK6"/>
<dbReference type="GeneID" id="1190130"/>
<dbReference type="KEGG" id="vpa:VP2606"/>
<dbReference type="PATRIC" id="fig|223926.6.peg.2502"/>
<dbReference type="eggNOG" id="COG0192">
    <property type="taxonomic scope" value="Bacteria"/>
</dbReference>
<dbReference type="HOGENOM" id="CLU_041802_1_1_6"/>
<dbReference type="UniPathway" id="UPA00315">
    <property type="reaction ID" value="UER00080"/>
</dbReference>
<dbReference type="Proteomes" id="UP000002493">
    <property type="component" value="Chromosome 1"/>
</dbReference>
<dbReference type="GO" id="GO:0005737">
    <property type="term" value="C:cytoplasm"/>
    <property type="evidence" value="ECO:0007669"/>
    <property type="project" value="UniProtKB-SubCell"/>
</dbReference>
<dbReference type="GO" id="GO:0005524">
    <property type="term" value="F:ATP binding"/>
    <property type="evidence" value="ECO:0007669"/>
    <property type="project" value="UniProtKB-UniRule"/>
</dbReference>
<dbReference type="GO" id="GO:0000287">
    <property type="term" value="F:magnesium ion binding"/>
    <property type="evidence" value="ECO:0007669"/>
    <property type="project" value="UniProtKB-UniRule"/>
</dbReference>
<dbReference type="GO" id="GO:0004478">
    <property type="term" value="F:methionine adenosyltransferase activity"/>
    <property type="evidence" value="ECO:0007669"/>
    <property type="project" value="UniProtKB-UniRule"/>
</dbReference>
<dbReference type="GO" id="GO:0006730">
    <property type="term" value="P:one-carbon metabolic process"/>
    <property type="evidence" value="ECO:0007669"/>
    <property type="project" value="UniProtKB-KW"/>
</dbReference>
<dbReference type="GO" id="GO:0006556">
    <property type="term" value="P:S-adenosylmethionine biosynthetic process"/>
    <property type="evidence" value="ECO:0007669"/>
    <property type="project" value="UniProtKB-UniRule"/>
</dbReference>
<dbReference type="CDD" id="cd18079">
    <property type="entry name" value="S-AdoMet_synt"/>
    <property type="match status" value="1"/>
</dbReference>
<dbReference type="FunFam" id="3.30.300.10:FF:000001">
    <property type="entry name" value="S-adenosylmethionine synthase"/>
    <property type="match status" value="1"/>
</dbReference>
<dbReference type="FunFam" id="3.30.300.10:FF:000003">
    <property type="entry name" value="S-adenosylmethionine synthase"/>
    <property type="match status" value="1"/>
</dbReference>
<dbReference type="Gene3D" id="3.30.300.10">
    <property type="match status" value="3"/>
</dbReference>
<dbReference type="HAMAP" id="MF_00086">
    <property type="entry name" value="S_AdoMet_synth1"/>
    <property type="match status" value="1"/>
</dbReference>
<dbReference type="InterPro" id="IPR022631">
    <property type="entry name" value="ADOMET_SYNTHASE_CS"/>
</dbReference>
<dbReference type="InterPro" id="IPR022630">
    <property type="entry name" value="S-AdoMet_synt_C"/>
</dbReference>
<dbReference type="InterPro" id="IPR022629">
    <property type="entry name" value="S-AdoMet_synt_central"/>
</dbReference>
<dbReference type="InterPro" id="IPR022628">
    <property type="entry name" value="S-AdoMet_synt_N"/>
</dbReference>
<dbReference type="InterPro" id="IPR002133">
    <property type="entry name" value="S-AdoMet_synthetase"/>
</dbReference>
<dbReference type="InterPro" id="IPR022636">
    <property type="entry name" value="S-AdoMet_synthetase_sfam"/>
</dbReference>
<dbReference type="NCBIfam" id="TIGR01034">
    <property type="entry name" value="metK"/>
    <property type="match status" value="1"/>
</dbReference>
<dbReference type="PANTHER" id="PTHR11964">
    <property type="entry name" value="S-ADENOSYLMETHIONINE SYNTHETASE"/>
    <property type="match status" value="1"/>
</dbReference>
<dbReference type="Pfam" id="PF02773">
    <property type="entry name" value="S-AdoMet_synt_C"/>
    <property type="match status" value="1"/>
</dbReference>
<dbReference type="Pfam" id="PF02772">
    <property type="entry name" value="S-AdoMet_synt_M"/>
    <property type="match status" value="1"/>
</dbReference>
<dbReference type="Pfam" id="PF00438">
    <property type="entry name" value="S-AdoMet_synt_N"/>
    <property type="match status" value="1"/>
</dbReference>
<dbReference type="PIRSF" id="PIRSF000497">
    <property type="entry name" value="MAT"/>
    <property type="match status" value="1"/>
</dbReference>
<dbReference type="SUPFAM" id="SSF55973">
    <property type="entry name" value="S-adenosylmethionine synthetase"/>
    <property type="match status" value="3"/>
</dbReference>
<dbReference type="PROSITE" id="PS00376">
    <property type="entry name" value="ADOMET_SYNTHASE_1"/>
    <property type="match status" value="1"/>
</dbReference>
<dbReference type="PROSITE" id="PS00377">
    <property type="entry name" value="ADOMET_SYNTHASE_2"/>
    <property type="match status" value="1"/>
</dbReference>
<proteinExistence type="inferred from homology"/>
<accession>Q87LK6</accession>